<keyword id="KW-1185">Reference proteome</keyword>
<keyword id="KW-0833">Ubl conjugation pathway</keyword>
<evidence type="ECO:0000255" key="1">
    <source>
        <dbReference type="PROSITE-ProRule" id="PRU00037"/>
    </source>
</evidence>
<evidence type="ECO:0000269" key="2">
    <source>
    </source>
</evidence>
<evidence type="ECO:0000269" key="3">
    <source>
    </source>
</evidence>
<sequence>MGDTKVETISRLAQWRIENFGPCSFKKSDPFKVGIWNWHLSIERNRYLSVRLFPELSRVSKEQPPVAKFVLRVSNVGPNRRFYISPVYEKLLRTTDDCVWHVDSSFHGRFTIDVEFLDLKICPVNGGEASPVWPTDATMQSISTQTTLKCLSRMLEESILTDVIIHTADGTLSAHKAILSASSTVFKSMFHHDLMEKESSTIHIDDMSRESCMALLSYLYGNITQEEFWKHRLALLGAANKYDITDLKAACEESLMEDINSSNVLERLQEAWLYQLEKLKKGCLMYLFDFGKIYDVREEISSFFRQADRELMLEMFQEVLSVWKPV</sequence>
<comment type="function">
    <text>May act as a substrate-specific adapter of an E3 ubiquitin-protein ligase complex (CUL3-RBX1-BTB) which mediates the ubiquitination and subsequent proteasomal degradation of target proteins.</text>
</comment>
<comment type="pathway">
    <text>Protein modification; protein ubiquitination.</text>
</comment>
<comment type="subunit">
    <text evidence="2 3">Homodimer. Interacts with CUL3A and CUL3B.</text>
</comment>
<comment type="interaction">
    <interactant intactId="EBI-541047">
        <id>Q9XHZ8</id>
    </interactant>
    <interactant intactId="EBI-531362">
        <id>Q9ZVH4</id>
        <label>CUL3A</label>
    </interactant>
    <organismsDiffer>false</organismsDiffer>
    <experiments>4</experiments>
</comment>
<comment type="domain">
    <text evidence="2">The BTB/POZ domain mediates the interaction with some component of ubiquitin ligase complexes.</text>
</comment>
<proteinExistence type="evidence at protein level"/>
<organism>
    <name type="scientific">Arabidopsis thaliana</name>
    <name type="common">Mouse-ear cress</name>
    <dbReference type="NCBI Taxonomy" id="3702"/>
    <lineage>
        <taxon>Eukaryota</taxon>
        <taxon>Viridiplantae</taxon>
        <taxon>Streptophyta</taxon>
        <taxon>Embryophyta</taxon>
        <taxon>Tracheophyta</taxon>
        <taxon>Spermatophyta</taxon>
        <taxon>Magnoliopsida</taxon>
        <taxon>eudicotyledons</taxon>
        <taxon>Gunneridae</taxon>
        <taxon>Pentapetalae</taxon>
        <taxon>rosids</taxon>
        <taxon>malvids</taxon>
        <taxon>Brassicales</taxon>
        <taxon>Brassicaceae</taxon>
        <taxon>Camelineae</taxon>
        <taxon>Arabidopsis</taxon>
    </lineage>
</organism>
<reference key="1">
    <citation type="journal article" date="2000" name="Nature">
        <title>Sequence and analysis of chromosome 1 of the plant Arabidopsis thaliana.</title>
        <authorList>
            <person name="Theologis A."/>
            <person name="Ecker J.R."/>
            <person name="Palm C.J."/>
            <person name="Federspiel N.A."/>
            <person name="Kaul S."/>
            <person name="White O."/>
            <person name="Alonso J."/>
            <person name="Altafi H."/>
            <person name="Araujo R."/>
            <person name="Bowman C.L."/>
            <person name="Brooks S.Y."/>
            <person name="Buehler E."/>
            <person name="Chan A."/>
            <person name="Chao Q."/>
            <person name="Chen H."/>
            <person name="Cheuk R.F."/>
            <person name="Chin C.W."/>
            <person name="Chung M.K."/>
            <person name="Conn L."/>
            <person name="Conway A.B."/>
            <person name="Conway A.R."/>
            <person name="Creasy T.H."/>
            <person name="Dewar K."/>
            <person name="Dunn P."/>
            <person name="Etgu P."/>
            <person name="Feldblyum T.V."/>
            <person name="Feng J.-D."/>
            <person name="Fong B."/>
            <person name="Fujii C.Y."/>
            <person name="Gill J.E."/>
            <person name="Goldsmith A.D."/>
            <person name="Haas B."/>
            <person name="Hansen N.F."/>
            <person name="Hughes B."/>
            <person name="Huizar L."/>
            <person name="Hunter J.L."/>
            <person name="Jenkins J."/>
            <person name="Johnson-Hopson C."/>
            <person name="Khan S."/>
            <person name="Khaykin E."/>
            <person name="Kim C.J."/>
            <person name="Koo H.L."/>
            <person name="Kremenetskaia I."/>
            <person name="Kurtz D.B."/>
            <person name="Kwan A."/>
            <person name="Lam B."/>
            <person name="Langin-Hooper S."/>
            <person name="Lee A."/>
            <person name="Lee J.M."/>
            <person name="Lenz C.A."/>
            <person name="Li J.H."/>
            <person name="Li Y.-P."/>
            <person name="Lin X."/>
            <person name="Liu S.X."/>
            <person name="Liu Z.A."/>
            <person name="Luros J.S."/>
            <person name="Maiti R."/>
            <person name="Marziali A."/>
            <person name="Militscher J."/>
            <person name="Miranda M."/>
            <person name="Nguyen M."/>
            <person name="Nierman W.C."/>
            <person name="Osborne B.I."/>
            <person name="Pai G."/>
            <person name="Peterson J."/>
            <person name="Pham P.K."/>
            <person name="Rizzo M."/>
            <person name="Rooney T."/>
            <person name="Rowley D."/>
            <person name="Sakano H."/>
            <person name="Salzberg S.L."/>
            <person name="Schwartz J.R."/>
            <person name="Shinn P."/>
            <person name="Southwick A.M."/>
            <person name="Sun H."/>
            <person name="Tallon L.J."/>
            <person name="Tambunga G."/>
            <person name="Toriumi M.J."/>
            <person name="Town C.D."/>
            <person name="Utterback T."/>
            <person name="Van Aken S."/>
            <person name="Vaysberg M."/>
            <person name="Vysotskaia V.S."/>
            <person name="Walker M."/>
            <person name="Wu D."/>
            <person name="Yu G."/>
            <person name="Fraser C.M."/>
            <person name="Venter J.C."/>
            <person name="Davis R.W."/>
        </authorList>
    </citation>
    <scope>NUCLEOTIDE SEQUENCE [LARGE SCALE GENOMIC DNA]</scope>
    <source>
        <strain>cv. Columbia</strain>
    </source>
</reference>
<reference key="2">
    <citation type="journal article" date="2017" name="Plant J.">
        <title>Araport11: a complete reannotation of the Arabidopsis thaliana reference genome.</title>
        <authorList>
            <person name="Cheng C.Y."/>
            <person name="Krishnakumar V."/>
            <person name="Chan A.P."/>
            <person name="Thibaud-Nissen F."/>
            <person name="Schobel S."/>
            <person name="Town C.D."/>
        </authorList>
    </citation>
    <scope>GENOME REANNOTATION</scope>
    <source>
        <strain>cv. Columbia</strain>
    </source>
</reference>
<reference key="3">
    <citation type="submission" date="2006-03" db="EMBL/GenBank/DDBJ databases">
        <title>Arabidopsis ORF clones.</title>
        <authorList>
            <person name="Shinn P."/>
            <person name="Chen H."/>
            <person name="Kim C.J."/>
            <person name="Ecker J.R."/>
        </authorList>
    </citation>
    <scope>NUCLEOTIDE SEQUENCE [LARGE SCALE MRNA]</scope>
    <source>
        <strain>cv. Columbia</strain>
    </source>
</reference>
<reference key="4">
    <citation type="submission" date="2006-07" db="EMBL/GenBank/DDBJ databases">
        <title>Large-scale analysis of RIKEN Arabidopsis full-length (RAFL) cDNAs.</title>
        <authorList>
            <person name="Totoki Y."/>
            <person name="Seki M."/>
            <person name="Ishida J."/>
            <person name="Nakajima M."/>
            <person name="Enju A."/>
            <person name="Kamiya A."/>
            <person name="Narusaka M."/>
            <person name="Shin-i T."/>
            <person name="Nakagawa M."/>
            <person name="Sakamoto N."/>
            <person name="Oishi K."/>
            <person name="Kohara Y."/>
            <person name="Kobayashi M."/>
            <person name="Toyoda A."/>
            <person name="Sakaki Y."/>
            <person name="Sakurai T."/>
            <person name="Iida K."/>
            <person name="Akiyama K."/>
            <person name="Satou M."/>
            <person name="Toyoda T."/>
            <person name="Konagaya A."/>
            <person name="Carninci P."/>
            <person name="Kawai J."/>
            <person name="Hayashizaki Y."/>
            <person name="Shinozaki K."/>
        </authorList>
    </citation>
    <scope>NUCLEOTIDE SEQUENCE [LARGE SCALE MRNA] OF 60-326</scope>
    <source>
        <strain>cv. Columbia</strain>
    </source>
</reference>
<reference key="5">
    <citation type="submission" date="2002-03" db="EMBL/GenBank/DDBJ databases">
        <title>Full-length cDNA from Arabidopsis thaliana.</title>
        <authorList>
            <person name="Brover V.V."/>
            <person name="Troukhan M.E."/>
            <person name="Alexandrov N.A."/>
            <person name="Lu Y.-P."/>
            <person name="Flavell R.B."/>
            <person name="Feldmann K.A."/>
        </authorList>
    </citation>
    <scope>NUCLEOTIDE SEQUENCE [LARGE SCALE MRNA]</scope>
</reference>
<reference key="6">
    <citation type="journal article" date="2005" name="J. Biol. Chem.">
        <title>Cullins 3a and 3b assemble with members of the broad complex/tramtrack/bric-a-brac (BTB) protein family to form essential ubiquitin-protein ligases (E3s) in Arabidopsis.</title>
        <authorList>
            <person name="Gingerich D.J."/>
            <person name="Gagne J.M."/>
            <person name="Salter D.W."/>
            <person name="Hellmann H."/>
            <person name="Estelle M."/>
            <person name="Ma L."/>
            <person name="Vierstra R.D."/>
        </authorList>
    </citation>
    <scope>DOMAIN BTB</scope>
    <scope>INTERACTION WITH CUL3A AND CUL3B</scope>
</reference>
<reference key="7">
    <citation type="journal article" date="2005" name="Plant Cell">
        <title>Arabidopsis has two redundant Cullin3 proteins that are essential for embryo development and that interact with RBX1 and BTB proteins to form multisubunit E3 ubiquitin ligase complexes in vivo.</title>
        <authorList>
            <person name="Figueroa P."/>
            <person name="Gusmaroli G."/>
            <person name="Serino G."/>
            <person name="Habashi J."/>
            <person name="Ma L."/>
            <person name="Shen Y."/>
            <person name="Feng S."/>
            <person name="Bostick M."/>
            <person name="Callis J."/>
            <person name="Hellmann H."/>
            <person name="Deng X.W."/>
        </authorList>
    </citation>
    <scope>INTERACTION WITH CUL3A</scope>
    <scope>HOMODIMERIZATION</scope>
    <scope>MUTAGENESIS OF ILE-204 AND TYR-242</scope>
</reference>
<accession>Q9XHZ8</accession>
<accession>Q0WS66</accession>
<gene>
    <name type="ordered locus">At1g21780</name>
    <name type="ORF">F8K7.22</name>
</gene>
<protein>
    <recommendedName>
        <fullName>BTB/POZ domain-containing protein At1g21780</fullName>
    </recommendedName>
</protein>
<name>Y1178_ARATH</name>
<feature type="chain" id="PRO_0000406090" description="BTB/POZ domain-containing protein At1g21780">
    <location>
        <begin position="1"/>
        <end position="326"/>
    </location>
</feature>
<feature type="domain" description="BTB" evidence="1">
    <location>
        <begin position="161"/>
        <end position="228"/>
    </location>
</feature>
<feature type="mutagenesis site" description="Abolishes the interaction with CUL3A." evidence="3">
    <original>I</original>
    <variation>R</variation>
    <location>
        <position position="204"/>
    </location>
</feature>
<feature type="mutagenesis site" description="Abolishes the interaction with CUL3A." evidence="3">
    <original>Y</original>
    <variation>A</variation>
    <location>
        <position position="242"/>
    </location>
</feature>
<dbReference type="EMBL" id="AC007727">
    <property type="protein sequence ID" value="AAD41432.1"/>
    <property type="molecule type" value="Genomic_DNA"/>
</dbReference>
<dbReference type="EMBL" id="CP002684">
    <property type="protein sequence ID" value="AEE30155.1"/>
    <property type="molecule type" value="Genomic_DNA"/>
</dbReference>
<dbReference type="EMBL" id="CP002684">
    <property type="protein sequence ID" value="AEE30156.1"/>
    <property type="molecule type" value="Genomic_DNA"/>
</dbReference>
<dbReference type="EMBL" id="BT024719">
    <property type="protein sequence ID" value="ABD59057.1"/>
    <property type="molecule type" value="mRNA"/>
</dbReference>
<dbReference type="EMBL" id="AK228073">
    <property type="protein sequence ID" value="BAF00033.1"/>
    <property type="molecule type" value="mRNA"/>
</dbReference>
<dbReference type="EMBL" id="AY087548">
    <property type="protein sequence ID" value="AAM65090.1"/>
    <property type="molecule type" value="mRNA"/>
</dbReference>
<dbReference type="PIR" id="E86351">
    <property type="entry name" value="E86351"/>
</dbReference>
<dbReference type="RefSeq" id="NP_001077574.1">
    <property type="nucleotide sequence ID" value="NM_001084105.1"/>
</dbReference>
<dbReference type="RefSeq" id="NP_173597.1">
    <property type="nucleotide sequence ID" value="NM_102027.3"/>
</dbReference>
<dbReference type="SMR" id="Q9XHZ8"/>
<dbReference type="BioGRID" id="24021">
    <property type="interactions" value="4"/>
</dbReference>
<dbReference type="FunCoup" id="Q9XHZ8">
    <property type="interactions" value="250"/>
</dbReference>
<dbReference type="IntAct" id="Q9XHZ8">
    <property type="interactions" value="3"/>
</dbReference>
<dbReference type="STRING" id="3702.Q9XHZ8"/>
<dbReference type="GlyGen" id="Q9XHZ8">
    <property type="glycosylation" value="1 site"/>
</dbReference>
<dbReference type="PaxDb" id="3702-AT1G21780.2"/>
<dbReference type="ProteomicsDB" id="242519"/>
<dbReference type="DNASU" id="838782"/>
<dbReference type="EnsemblPlants" id="AT1G21780.1">
    <property type="protein sequence ID" value="AT1G21780.1"/>
    <property type="gene ID" value="AT1G21780"/>
</dbReference>
<dbReference type="EnsemblPlants" id="AT1G21780.2">
    <property type="protein sequence ID" value="AT1G21780.2"/>
    <property type="gene ID" value="AT1G21780"/>
</dbReference>
<dbReference type="GeneID" id="838782"/>
<dbReference type="Gramene" id="AT1G21780.1">
    <property type="protein sequence ID" value="AT1G21780.1"/>
    <property type="gene ID" value="AT1G21780"/>
</dbReference>
<dbReference type="Gramene" id="AT1G21780.2">
    <property type="protein sequence ID" value="AT1G21780.2"/>
    <property type="gene ID" value="AT1G21780"/>
</dbReference>
<dbReference type="KEGG" id="ath:AT1G21780"/>
<dbReference type="Araport" id="AT1G21780"/>
<dbReference type="TAIR" id="AT1G21780"/>
<dbReference type="eggNOG" id="KOG1987">
    <property type="taxonomic scope" value="Eukaryota"/>
</dbReference>
<dbReference type="HOGENOM" id="CLU_061287_0_0_1"/>
<dbReference type="InParanoid" id="Q9XHZ8"/>
<dbReference type="OMA" id="CSIWPNE"/>
<dbReference type="PhylomeDB" id="Q9XHZ8"/>
<dbReference type="UniPathway" id="UPA00143"/>
<dbReference type="PRO" id="PR:Q9XHZ8"/>
<dbReference type="Proteomes" id="UP000006548">
    <property type="component" value="Chromosome 1"/>
</dbReference>
<dbReference type="ExpressionAtlas" id="Q9XHZ8">
    <property type="expression patterns" value="baseline and differential"/>
</dbReference>
<dbReference type="GO" id="GO:0016567">
    <property type="term" value="P:protein ubiquitination"/>
    <property type="evidence" value="ECO:0007669"/>
    <property type="project" value="UniProtKB-UniPathway"/>
</dbReference>
<dbReference type="CDD" id="cd18186">
    <property type="entry name" value="BTB_POZ_ZBTB_KLHL-like"/>
    <property type="match status" value="1"/>
</dbReference>
<dbReference type="Gene3D" id="3.30.710.10">
    <property type="entry name" value="Potassium Channel Kv1.1, Chain A"/>
    <property type="match status" value="1"/>
</dbReference>
<dbReference type="InterPro" id="IPR044714">
    <property type="entry name" value="AtSIBP1-like"/>
</dbReference>
<dbReference type="InterPro" id="IPR000210">
    <property type="entry name" value="BTB/POZ_dom"/>
</dbReference>
<dbReference type="InterPro" id="IPR011333">
    <property type="entry name" value="SKP1/BTB/POZ_sf"/>
</dbReference>
<dbReference type="PANTHER" id="PTHR46672:SF1">
    <property type="entry name" value="OS08G0103600 PROTEIN"/>
    <property type="match status" value="1"/>
</dbReference>
<dbReference type="PANTHER" id="PTHR46672">
    <property type="entry name" value="OS08G0495500 PROTEIN-RELATED"/>
    <property type="match status" value="1"/>
</dbReference>
<dbReference type="Pfam" id="PF00651">
    <property type="entry name" value="BTB"/>
    <property type="match status" value="1"/>
</dbReference>
<dbReference type="SMART" id="SM00225">
    <property type="entry name" value="BTB"/>
    <property type="match status" value="1"/>
</dbReference>
<dbReference type="SUPFAM" id="SSF54695">
    <property type="entry name" value="POZ domain"/>
    <property type="match status" value="1"/>
</dbReference>
<dbReference type="PROSITE" id="PS50097">
    <property type="entry name" value="BTB"/>
    <property type="match status" value="1"/>
</dbReference>